<evidence type="ECO:0000250" key="1">
    <source>
        <dbReference type="UniProtKB" id="P02470"/>
    </source>
</evidence>
<evidence type="ECO:0000250" key="2">
    <source>
        <dbReference type="UniProtKB" id="P02489"/>
    </source>
</evidence>
<evidence type="ECO:0000255" key="3">
    <source>
        <dbReference type="PROSITE-ProRule" id="PRU00285"/>
    </source>
</evidence>
<dbReference type="EMBL" id="L25850">
    <property type="protein sequence ID" value="AAA49254.1"/>
    <property type="molecule type" value="mRNA"/>
</dbReference>
<dbReference type="PIR" id="I50540">
    <property type="entry name" value="I50540"/>
</dbReference>
<dbReference type="SMR" id="Q90497"/>
<dbReference type="GO" id="GO:0005737">
    <property type="term" value="C:cytoplasm"/>
    <property type="evidence" value="ECO:0007669"/>
    <property type="project" value="UniProtKB-SubCell"/>
</dbReference>
<dbReference type="GO" id="GO:0005634">
    <property type="term" value="C:nucleus"/>
    <property type="evidence" value="ECO:0007669"/>
    <property type="project" value="UniProtKB-SubCell"/>
</dbReference>
<dbReference type="GO" id="GO:0046872">
    <property type="term" value="F:metal ion binding"/>
    <property type="evidence" value="ECO:0007669"/>
    <property type="project" value="UniProtKB-KW"/>
</dbReference>
<dbReference type="GO" id="GO:0005212">
    <property type="term" value="F:structural constituent of eye lens"/>
    <property type="evidence" value="ECO:0007669"/>
    <property type="project" value="UniProtKB-KW"/>
</dbReference>
<dbReference type="GO" id="GO:0051082">
    <property type="term" value="F:unfolded protein binding"/>
    <property type="evidence" value="ECO:0007669"/>
    <property type="project" value="TreeGrafter"/>
</dbReference>
<dbReference type="GO" id="GO:0002088">
    <property type="term" value="P:lens development in camera-type eye"/>
    <property type="evidence" value="ECO:0007669"/>
    <property type="project" value="TreeGrafter"/>
</dbReference>
<dbReference type="GO" id="GO:0043066">
    <property type="term" value="P:negative regulation of apoptotic process"/>
    <property type="evidence" value="ECO:0007669"/>
    <property type="project" value="TreeGrafter"/>
</dbReference>
<dbReference type="GO" id="GO:0042026">
    <property type="term" value="P:protein refolding"/>
    <property type="evidence" value="ECO:0007669"/>
    <property type="project" value="TreeGrafter"/>
</dbReference>
<dbReference type="GO" id="GO:0009408">
    <property type="term" value="P:response to heat"/>
    <property type="evidence" value="ECO:0007669"/>
    <property type="project" value="TreeGrafter"/>
</dbReference>
<dbReference type="CDD" id="cd06497">
    <property type="entry name" value="ACD_alphaA-crystallin_HspB4"/>
    <property type="match status" value="1"/>
</dbReference>
<dbReference type="FunFam" id="2.60.40.790:FF:000008">
    <property type="entry name" value="Alpha-crystallin A chain"/>
    <property type="match status" value="1"/>
</dbReference>
<dbReference type="Gene3D" id="2.60.40.790">
    <property type="match status" value="1"/>
</dbReference>
<dbReference type="InterPro" id="IPR002068">
    <property type="entry name" value="A-crystallin/Hsp20_dom"/>
</dbReference>
<dbReference type="InterPro" id="IPR055269">
    <property type="entry name" value="Alpha-crystallin/HSP_16"/>
</dbReference>
<dbReference type="InterPro" id="IPR001436">
    <property type="entry name" value="Alpha-crystallin/sHSP_animal"/>
</dbReference>
<dbReference type="InterPro" id="IPR003090">
    <property type="entry name" value="Alpha-crystallin_N"/>
</dbReference>
<dbReference type="InterPro" id="IPR008978">
    <property type="entry name" value="HSP20-like_chaperone"/>
</dbReference>
<dbReference type="PANTHER" id="PTHR45640:SF14">
    <property type="entry name" value="ALPHA-CRYSTALLIN A CHAIN"/>
    <property type="match status" value="1"/>
</dbReference>
<dbReference type="PANTHER" id="PTHR45640">
    <property type="entry name" value="HEAT SHOCK PROTEIN HSP-12.2-RELATED"/>
    <property type="match status" value="1"/>
</dbReference>
<dbReference type="Pfam" id="PF00525">
    <property type="entry name" value="Crystallin"/>
    <property type="match status" value="1"/>
</dbReference>
<dbReference type="Pfam" id="PF00011">
    <property type="entry name" value="HSP20"/>
    <property type="match status" value="1"/>
</dbReference>
<dbReference type="PIRSF" id="PIRSF036514">
    <property type="entry name" value="Sm_HSP_B1"/>
    <property type="match status" value="1"/>
</dbReference>
<dbReference type="PRINTS" id="PR00299">
    <property type="entry name" value="ACRYSTALLIN"/>
</dbReference>
<dbReference type="SUPFAM" id="SSF49764">
    <property type="entry name" value="HSP20-like chaperones"/>
    <property type="match status" value="1"/>
</dbReference>
<dbReference type="PROSITE" id="PS01031">
    <property type="entry name" value="SHSP"/>
    <property type="match status" value="1"/>
</dbReference>
<protein>
    <recommendedName>
        <fullName>Alpha-crystallin A chain</fullName>
    </recommendedName>
</protein>
<name>CRYAA_EUDEL</name>
<proteinExistence type="evidence at transcript level"/>
<sequence length="149" mass="17078">RALGPLIPSRLFDQFFGEGLLEYDLLPLFSSTISPYYRQSLFRSVLESGISEVRSDREKFTIMLDVKHFSPEDLSVKIIDDFVEIHGKHSERQDDHGYISREFHRRYRLPSNVDQSAITCSLSSDGMLTFSGPKVQANMDPSHSERPIP</sequence>
<keyword id="KW-0963">Cytoplasm</keyword>
<keyword id="KW-0273">Eye lens protein</keyword>
<keyword id="KW-0479">Metal-binding</keyword>
<keyword id="KW-0539">Nucleus</keyword>
<keyword id="KW-0862">Zinc</keyword>
<reference key="1">
    <citation type="journal article" date="1994" name="Mol. Biol. Evol.">
        <title>Alpha A-crystallin sequences group tinamou with ratites.</title>
        <authorList>
            <person name="Caspers G.J."/>
            <person name="Wattel J."/>
            <person name="de Jong W.W."/>
        </authorList>
    </citation>
    <scope>NUCLEOTIDE SEQUENCE [MRNA]</scope>
    <source>
        <tissue>Lens</tissue>
    </source>
</reference>
<comment type="function">
    <text evidence="2">Contributes to the transparency and refractive index of the lens. May act as a chaperone, preventing aggregation of various proteins under a wide range of stress conditions.</text>
</comment>
<comment type="subunit">
    <text evidence="1 2">Heteropolymer composed of three CRYAA and one CRYAB subunits (By similarity). Inter-subunit bridging via zinc ions enhances stability, which is crucial as there is no protein turn over in the lens. Can also form homodimers and homotetramers (dimers of dimers) which serve as the building blocks of homooligomers (By similarity). Within homooligomers, the zinc-binding motif is created from residues of 3 different molecules. His-89 and Glu-91 from one molecule are ligands of the zinc ion, and His-96 and His-143 residues from additional molecules complete the site with tetrahedral coordination geometry (By similarity).</text>
</comment>
<comment type="subcellular location">
    <subcellularLocation>
        <location evidence="2">Cytoplasm</location>
    </subcellularLocation>
    <subcellularLocation>
        <location evidence="2">Nucleus</location>
    </subcellularLocation>
    <text evidence="2">Translocates to the nucleus during heat shock.</text>
</comment>
<comment type="similarity">
    <text evidence="3">Belongs to the small heat shock protein (HSP20) family.</text>
</comment>
<gene>
    <name type="primary">CRYAA</name>
</gene>
<feature type="chain" id="PRO_0000125895" description="Alpha-crystallin A chain">
    <location>
        <begin position="1" status="less than"/>
        <end position="149" status="greater than"/>
    </location>
</feature>
<feature type="domain" description="sHSP" evidence="3">
    <location>
        <begin position="41"/>
        <end position="149"/>
    </location>
</feature>
<feature type="binding site" evidence="1">
    <location>
        <position position="89"/>
    </location>
    <ligand>
        <name>Zn(2+)</name>
        <dbReference type="ChEBI" id="CHEBI:29105"/>
        <label>1</label>
    </ligand>
</feature>
<feature type="binding site" evidence="1">
    <location>
        <position position="91"/>
    </location>
    <ligand>
        <name>Zn(2+)</name>
        <dbReference type="ChEBI" id="CHEBI:29105"/>
        <label>1</label>
    </ligand>
</feature>
<feature type="binding site" evidence="1">
    <location>
        <position position="96"/>
    </location>
    <ligand>
        <name>Zn(2+)</name>
        <dbReference type="ChEBI" id="CHEBI:29105"/>
        <label>2</label>
    </ligand>
</feature>
<feature type="binding site" evidence="1">
    <location>
        <position position="143"/>
    </location>
    <ligand>
        <name>Zn(2+)</name>
        <dbReference type="ChEBI" id="CHEBI:29105"/>
        <label>3</label>
    </ligand>
</feature>
<feature type="non-terminal residue">
    <location>
        <position position="1"/>
    </location>
</feature>
<feature type="non-terminal residue">
    <location>
        <position position="149"/>
    </location>
</feature>
<accession>Q90497</accession>
<organism>
    <name type="scientific">Eudromia elegans</name>
    <name type="common">Elegant crested-tinamou</name>
    <dbReference type="NCBI Taxonomy" id="8805"/>
    <lineage>
        <taxon>Eukaryota</taxon>
        <taxon>Metazoa</taxon>
        <taxon>Chordata</taxon>
        <taxon>Craniata</taxon>
        <taxon>Vertebrata</taxon>
        <taxon>Euteleostomi</taxon>
        <taxon>Archelosauria</taxon>
        <taxon>Archosauria</taxon>
        <taxon>Dinosauria</taxon>
        <taxon>Saurischia</taxon>
        <taxon>Theropoda</taxon>
        <taxon>Coelurosauria</taxon>
        <taxon>Aves</taxon>
        <taxon>Palaeognathae</taxon>
        <taxon>Tinamiformes</taxon>
        <taxon>Tinamidae</taxon>
        <taxon>Eudromia</taxon>
    </lineage>
</organism>